<protein>
    <recommendedName>
        <fullName evidence="1">7-cyano-7-deazaguanine synthase</fullName>
        <ecNumber evidence="1">6.3.4.20</ecNumber>
    </recommendedName>
    <alternativeName>
        <fullName evidence="1">7-cyano-7-carbaguanine synthase</fullName>
    </alternativeName>
    <alternativeName>
        <fullName evidence="1">PreQ(0) synthase</fullName>
    </alternativeName>
    <alternativeName>
        <fullName evidence="1">Queuosine biosynthesis protein QueC</fullName>
    </alternativeName>
</protein>
<accession>A0LJR5</accession>
<comment type="function">
    <text evidence="1">Catalyzes the ATP-dependent conversion of 7-carboxy-7-deazaguanine (CDG) to 7-cyano-7-deazaguanine (preQ(0)).</text>
</comment>
<comment type="catalytic activity">
    <reaction evidence="1">
        <text>7-carboxy-7-deazaguanine + NH4(+) + ATP = 7-cyano-7-deazaguanine + ADP + phosphate + H2O + H(+)</text>
        <dbReference type="Rhea" id="RHEA:27982"/>
        <dbReference type="ChEBI" id="CHEBI:15377"/>
        <dbReference type="ChEBI" id="CHEBI:15378"/>
        <dbReference type="ChEBI" id="CHEBI:28938"/>
        <dbReference type="ChEBI" id="CHEBI:30616"/>
        <dbReference type="ChEBI" id="CHEBI:43474"/>
        <dbReference type="ChEBI" id="CHEBI:45075"/>
        <dbReference type="ChEBI" id="CHEBI:61036"/>
        <dbReference type="ChEBI" id="CHEBI:456216"/>
        <dbReference type="EC" id="6.3.4.20"/>
    </reaction>
</comment>
<comment type="cofactor">
    <cofactor evidence="1">
        <name>Zn(2+)</name>
        <dbReference type="ChEBI" id="CHEBI:29105"/>
    </cofactor>
    <text evidence="1">Binds 1 zinc ion per subunit.</text>
</comment>
<comment type="pathway">
    <text evidence="1">Purine metabolism; 7-cyano-7-deazaguanine biosynthesis.</text>
</comment>
<comment type="similarity">
    <text evidence="1">Belongs to the QueC family.</text>
</comment>
<evidence type="ECO:0000255" key="1">
    <source>
        <dbReference type="HAMAP-Rule" id="MF_01633"/>
    </source>
</evidence>
<proteinExistence type="inferred from homology"/>
<sequence>MGQEHRRKAVVLFSGGIDSTTCLAVAKAEGFEAYALSFFYHQRHGVEVEAARRSAPALGAREHLVLELPLDRIGGSALTGHEEVPKDVPVEKMSDRIPATYVPARNTIFLSFALAWAEVLGAADIFIGVNALDYSGYPDCRPEYIAAFERMANLAIRETVEGRMRIKVHTPLIRLTKGEIIKRGLELGLDYSLTHSCYDPDARGLACGHCDSCILRKKGFMEAGIPDPTRYVRD</sequence>
<name>QUEC_SYNFM</name>
<gene>
    <name evidence="1" type="primary">queC</name>
    <name type="ordered locus">Sfum_1984</name>
</gene>
<organism>
    <name type="scientific">Syntrophobacter fumaroxidans (strain DSM 10017 / MPOB)</name>
    <dbReference type="NCBI Taxonomy" id="335543"/>
    <lineage>
        <taxon>Bacteria</taxon>
        <taxon>Pseudomonadati</taxon>
        <taxon>Thermodesulfobacteriota</taxon>
        <taxon>Syntrophobacteria</taxon>
        <taxon>Syntrophobacterales</taxon>
        <taxon>Syntrophobacteraceae</taxon>
        <taxon>Syntrophobacter</taxon>
    </lineage>
</organism>
<keyword id="KW-0067">ATP-binding</keyword>
<keyword id="KW-0436">Ligase</keyword>
<keyword id="KW-0479">Metal-binding</keyword>
<keyword id="KW-0547">Nucleotide-binding</keyword>
<keyword id="KW-0671">Queuosine biosynthesis</keyword>
<keyword id="KW-1185">Reference proteome</keyword>
<keyword id="KW-0862">Zinc</keyword>
<feature type="chain" id="PRO_0000336962" description="7-cyano-7-deazaguanine synthase">
    <location>
        <begin position="1"/>
        <end position="234"/>
    </location>
</feature>
<feature type="binding site" evidence="1">
    <location>
        <begin position="13"/>
        <end position="23"/>
    </location>
    <ligand>
        <name>ATP</name>
        <dbReference type="ChEBI" id="CHEBI:30616"/>
    </ligand>
</feature>
<feature type="binding site" evidence="1">
    <location>
        <position position="197"/>
    </location>
    <ligand>
        <name>Zn(2+)</name>
        <dbReference type="ChEBI" id="CHEBI:29105"/>
    </ligand>
</feature>
<feature type="binding site" evidence="1">
    <location>
        <position position="207"/>
    </location>
    <ligand>
        <name>Zn(2+)</name>
        <dbReference type="ChEBI" id="CHEBI:29105"/>
    </ligand>
</feature>
<feature type="binding site" evidence="1">
    <location>
        <position position="210"/>
    </location>
    <ligand>
        <name>Zn(2+)</name>
        <dbReference type="ChEBI" id="CHEBI:29105"/>
    </ligand>
</feature>
<feature type="binding site" evidence="1">
    <location>
        <position position="213"/>
    </location>
    <ligand>
        <name>Zn(2+)</name>
        <dbReference type="ChEBI" id="CHEBI:29105"/>
    </ligand>
</feature>
<reference key="1">
    <citation type="submission" date="2006-10" db="EMBL/GenBank/DDBJ databases">
        <title>Complete sequence of Syntrophobacter fumaroxidans MPOB.</title>
        <authorList>
            <consortium name="US DOE Joint Genome Institute"/>
            <person name="Copeland A."/>
            <person name="Lucas S."/>
            <person name="Lapidus A."/>
            <person name="Barry K."/>
            <person name="Detter J.C."/>
            <person name="Glavina del Rio T."/>
            <person name="Hammon N."/>
            <person name="Israni S."/>
            <person name="Pitluck S."/>
            <person name="Goltsman E.G."/>
            <person name="Martinez M."/>
            <person name="Schmutz J."/>
            <person name="Larimer F."/>
            <person name="Land M."/>
            <person name="Hauser L."/>
            <person name="Kyrpides N."/>
            <person name="Kim E."/>
            <person name="Boone D.R."/>
            <person name="Brockman F."/>
            <person name="Culley D."/>
            <person name="Ferry J."/>
            <person name="Gunsalus R."/>
            <person name="McInerney M.J."/>
            <person name="Morrison M."/>
            <person name="Plugge C."/>
            <person name="Rohlin L."/>
            <person name="Scholten J."/>
            <person name="Sieber J."/>
            <person name="Stams A.J.M."/>
            <person name="Worm P."/>
            <person name="Henstra A.M."/>
            <person name="Richardson P."/>
        </authorList>
    </citation>
    <scope>NUCLEOTIDE SEQUENCE [LARGE SCALE GENOMIC DNA]</scope>
    <source>
        <strain>DSM 10017 / MPOB</strain>
    </source>
</reference>
<dbReference type="EC" id="6.3.4.20" evidence="1"/>
<dbReference type="EMBL" id="CP000478">
    <property type="protein sequence ID" value="ABK17667.1"/>
    <property type="molecule type" value="Genomic_DNA"/>
</dbReference>
<dbReference type="RefSeq" id="WP_011698837.1">
    <property type="nucleotide sequence ID" value="NC_008554.1"/>
</dbReference>
<dbReference type="SMR" id="A0LJR5"/>
<dbReference type="FunCoup" id="A0LJR5">
    <property type="interactions" value="176"/>
</dbReference>
<dbReference type="STRING" id="335543.Sfum_1984"/>
<dbReference type="KEGG" id="sfu:Sfum_1984"/>
<dbReference type="eggNOG" id="COG0603">
    <property type="taxonomic scope" value="Bacteria"/>
</dbReference>
<dbReference type="HOGENOM" id="CLU_081854_1_1_7"/>
<dbReference type="InParanoid" id="A0LJR5"/>
<dbReference type="OrthoDB" id="9789567at2"/>
<dbReference type="UniPathway" id="UPA00391"/>
<dbReference type="Proteomes" id="UP000001784">
    <property type="component" value="Chromosome"/>
</dbReference>
<dbReference type="GO" id="GO:0005524">
    <property type="term" value="F:ATP binding"/>
    <property type="evidence" value="ECO:0007669"/>
    <property type="project" value="UniProtKB-UniRule"/>
</dbReference>
<dbReference type="GO" id="GO:0016879">
    <property type="term" value="F:ligase activity, forming carbon-nitrogen bonds"/>
    <property type="evidence" value="ECO:0007669"/>
    <property type="project" value="UniProtKB-UniRule"/>
</dbReference>
<dbReference type="GO" id="GO:0008270">
    <property type="term" value="F:zinc ion binding"/>
    <property type="evidence" value="ECO:0007669"/>
    <property type="project" value="UniProtKB-UniRule"/>
</dbReference>
<dbReference type="GO" id="GO:0008616">
    <property type="term" value="P:queuosine biosynthetic process"/>
    <property type="evidence" value="ECO:0007669"/>
    <property type="project" value="UniProtKB-UniRule"/>
</dbReference>
<dbReference type="CDD" id="cd01995">
    <property type="entry name" value="QueC-like"/>
    <property type="match status" value="1"/>
</dbReference>
<dbReference type="Gene3D" id="3.40.50.620">
    <property type="entry name" value="HUPs"/>
    <property type="match status" value="1"/>
</dbReference>
<dbReference type="HAMAP" id="MF_01633">
    <property type="entry name" value="QueC"/>
    <property type="match status" value="1"/>
</dbReference>
<dbReference type="InterPro" id="IPR018317">
    <property type="entry name" value="QueC"/>
</dbReference>
<dbReference type="InterPro" id="IPR014729">
    <property type="entry name" value="Rossmann-like_a/b/a_fold"/>
</dbReference>
<dbReference type="NCBIfam" id="TIGR00364">
    <property type="entry name" value="7-cyano-7-deazaguanine synthase QueC"/>
    <property type="match status" value="1"/>
</dbReference>
<dbReference type="PANTHER" id="PTHR42914">
    <property type="entry name" value="7-CYANO-7-DEAZAGUANINE SYNTHASE"/>
    <property type="match status" value="1"/>
</dbReference>
<dbReference type="PANTHER" id="PTHR42914:SF1">
    <property type="entry name" value="7-CYANO-7-DEAZAGUANINE SYNTHASE"/>
    <property type="match status" value="1"/>
</dbReference>
<dbReference type="Pfam" id="PF06508">
    <property type="entry name" value="QueC"/>
    <property type="match status" value="1"/>
</dbReference>
<dbReference type="PIRSF" id="PIRSF006293">
    <property type="entry name" value="ExsB"/>
    <property type="match status" value="1"/>
</dbReference>
<dbReference type="SUPFAM" id="SSF52402">
    <property type="entry name" value="Adenine nucleotide alpha hydrolases-like"/>
    <property type="match status" value="1"/>
</dbReference>